<proteinExistence type="evidence at protein level"/>
<reference key="1">
    <citation type="submission" date="2000-10" db="EMBL/GenBank/DDBJ databases">
        <title>Molecular cloning of cytochrome b561 from Arabidopsis thaliana.</title>
        <authorList>
            <person name="Asada A."/>
            <person name="Kusakawa T."/>
            <person name="Orii H."/>
            <person name="Watanabe K."/>
            <person name="Tsubaki M."/>
        </authorList>
    </citation>
    <scope>NUCLEOTIDE SEQUENCE [MRNA]</scope>
</reference>
<reference key="2">
    <citation type="journal article" date="1999" name="Nature">
        <title>Sequence and analysis of chromosome 4 of the plant Arabidopsis thaliana.</title>
        <authorList>
            <person name="Mayer K.F.X."/>
            <person name="Schueller C."/>
            <person name="Wambutt R."/>
            <person name="Murphy G."/>
            <person name="Volckaert G."/>
            <person name="Pohl T."/>
            <person name="Duesterhoeft A."/>
            <person name="Stiekema W."/>
            <person name="Entian K.-D."/>
            <person name="Terryn N."/>
            <person name="Harris B."/>
            <person name="Ansorge W."/>
            <person name="Brandt P."/>
            <person name="Grivell L.A."/>
            <person name="Rieger M."/>
            <person name="Weichselgartner M."/>
            <person name="de Simone V."/>
            <person name="Obermaier B."/>
            <person name="Mache R."/>
            <person name="Mueller M."/>
            <person name="Kreis M."/>
            <person name="Delseny M."/>
            <person name="Puigdomenech P."/>
            <person name="Watson M."/>
            <person name="Schmidtheini T."/>
            <person name="Reichert B."/>
            <person name="Portetelle D."/>
            <person name="Perez-Alonso M."/>
            <person name="Boutry M."/>
            <person name="Bancroft I."/>
            <person name="Vos P."/>
            <person name="Hoheisel J."/>
            <person name="Zimmermann W."/>
            <person name="Wedler H."/>
            <person name="Ridley P."/>
            <person name="Langham S.-A."/>
            <person name="McCullagh B."/>
            <person name="Bilham L."/>
            <person name="Robben J."/>
            <person name="van der Schueren J."/>
            <person name="Grymonprez B."/>
            <person name="Chuang Y.-J."/>
            <person name="Vandenbussche F."/>
            <person name="Braeken M."/>
            <person name="Weltjens I."/>
            <person name="Voet M."/>
            <person name="Bastiaens I."/>
            <person name="Aert R."/>
            <person name="Defoor E."/>
            <person name="Weitzenegger T."/>
            <person name="Bothe G."/>
            <person name="Ramsperger U."/>
            <person name="Hilbert H."/>
            <person name="Braun M."/>
            <person name="Holzer E."/>
            <person name="Brandt A."/>
            <person name="Peters S."/>
            <person name="van Staveren M."/>
            <person name="Dirkse W."/>
            <person name="Mooijman P."/>
            <person name="Klein Lankhorst R."/>
            <person name="Rose M."/>
            <person name="Hauf J."/>
            <person name="Koetter P."/>
            <person name="Berneiser S."/>
            <person name="Hempel S."/>
            <person name="Feldpausch M."/>
            <person name="Lamberth S."/>
            <person name="Van den Daele H."/>
            <person name="De Keyser A."/>
            <person name="Buysshaert C."/>
            <person name="Gielen J."/>
            <person name="Villarroel R."/>
            <person name="De Clercq R."/>
            <person name="van Montagu M."/>
            <person name="Rogers J."/>
            <person name="Cronin A."/>
            <person name="Quail M.A."/>
            <person name="Bray-Allen S."/>
            <person name="Clark L."/>
            <person name="Doggett J."/>
            <person name="Hall S."/>
            <person name="Kay M."/>
            <person name="Lennard N."/>
            <person name="McLay K."/>
            <person name="Mayes R."/>
            <person name="Pettett A."/>
            <person name="Rajandream M.A."/>
            <person name="Lyne M."/>
            <person name="Benes V."/>
            <person name="Rechmann S."/>
            <person name="Borkova D."/>
            <person name="Bloecker H."/>
            <person name="Scharfe M."/>
            <person name="Grimm M."/>
            <person name="Loehnert T.-H."/>
            <person name="Dose S."/>
            <person name="de Haan M."/>
            <person name="Maarse A.C."/>
            <person name="Schaefer M."/>
            <person name="Mueller-Auer S."/>
            <person name="Gabel C."/>
            <person name="Fuchs M."/>
            <person name="Fartmann B."/>
            <person name="Granderath K."/>
            <person name="Dauner D."/>
            <person name="Herzl A."/>
            <person name="Neumann S."/>
            <person name="Argiriou A."/>
            <person name="Vitale D."/>
            <person name="Liguori R."/>
            <person name="Piravandi E."/>
            <person name="Massenet O."/>
            <person name="Quigley F."/>
            <person name="Clabauld G."/>
            <person name="Muendlein A."/>
            <person name="Felber R."/>
            <person name="Schnabl S."/>
            <person name="Hiller R."/>
            <person name="Schmidt W."/>
            <person name="Lecharny A."/>
            <person name="Aubourg S."/>
            <person name="Chefdor F."/>
            <person name="Cooke R."/>
            <person name="Berger C."/>
            <person name="Monfort A."/>
            <person name="Casacuberta E."/>
            <person name="Gibbons T."/>
            <person name="Weber N."/>
            <person name="Vandenbol M."/>
            <person name="Bargues M."/>
            <person name="Terol J."/>
            <person name="Torres A."/>
            <person name="Perez-Perez A."/>
            <person name="Purnelle B."/>
            <person name="Bent E."/>
            <person name="Johnson S."/>
            <person name="Tacon D."/>
            <person name="Jesse T."/>
            <person name="Heijnen L."/>
            <person name="Schwarz S."/>
            <person name="Scholler P."/>
            <person name="Heber S."/>
            <person name="Francs P."/>
            <person name="Bielke C."/>
            <person name="Frishman D."/>
            <person name="Haase D."/>
            <person name="Lemcke K."/>
            <person name="Mewes H.-W."/>
            <person name="Stocker S."/>
            <person name="Zaccaria P."/>
            <person name="Bevan M."/>
            <person name="Wilson R.K."/>
            <person name="de la Bastide M."/>
            <person name="Habermann K."/>
            <person name="Parnell L."/>
            <person name="Dedhia N."/>
            <person name="Gnoj L."/>
            <person name="Schutz K."/>
            <person name="Huang E."/>
            <person name="Spiegel L."/>
            <person name="Sekhon M."/>
            <person name="Murray J."/>
            <person name="Sheet P."/>
            <person name="Cordes M."/>
            <person name="Abu-Threideh J."/>
            <person name="Stoneking T."/>
            <person name="Kalicki J."/>
            <person name="Graves T."/>
            <person name="Harmon G."/>
            <person name="Edwards J."/>
            <person name="Latreille P."/>
            <person name="Courtney L."/>
            <person name="Cloud J."/>
            <person name="Abbott A."/>
            <person name="Scott K."/>
            <person name="Johnson D."/>
            <person name="Minx P."/>
            <person name="Bentley D."/>
            <person name="Fulton B."/>
            <person name="Miller N."/>
            <person name="Greco T."/>
            <person name="Kemp K."/>
            <person name="Kramer J."/>
            <person name="Fulton L."/>
            <person name="Mardis E."/>
            <person name="Dante M."/>
            <person name="Pepin K."/>
            <person name="Hillier L.W."/>
            <person name="Nelson J."/>
            <person name="Spieth J."/>
            <person name="Ryan E."/>
            <person name="Andrews S."/>
            <person name="Geisel C."/>
            <person name="Layman D."/>
            <person name="Du H."/>
            <person name="Ali J."/>
            <person name="Berghoff A."/>
            <person name="Jones K."/>
            <person name="Drone K."/>
            <person name="Cotton M."/>
            <person name="Joshu C."/>
            <person name="Antonoiu B."/>
            <person name="Zidanic M."/>
            <person name="Strong C."/>
            <person name="Sun H."/>
            <person name="Lamar B."/>
            <person name="Yordan C."/>
            <person name="Ma P."/>
            <person name="Zhong J."/>
            <person name="Preston R."/>
            <person name="Vil D."/>
            <person name="Shekher M."/>
            <person name="Matero A."/>
            <person name="Shah R."/>
            <person name="Swaby I.K."/>
            <person name="O'Shaughnessy A."/>
            <person name="Rodriguez M."/>
            <person name="Hoffman J."/>
            <person name="Till S."/>
            <person name="Granat S."/>
            <person name="Shohdy N."/>
            <person name="Hasegawa A."/>
            <person name="Hameed A."/>
            <person name="Lodhi M."/>
            <person name="Johnson A."/>
            <person name="Chen E."/>
            <person name="Marra M.A."/>
            <person name="Martienssen R."/>
            <person name="McCombie W.R."/>
        </authorList>
    </citation>
    <scope>NUCLEOTIDE SEQUENCE [LARGE SCALE GENOMIC DNA]</scope>
    <source>
        <strain>cv. Columbia</strain>
    </source>
</reference>
<reference key="3">
    <citation type="journal article" date="2017" name="Plant J.">
        <title>Araport11: a complete reannotation of the Arabidopsis thaliana reference genome.</title>
        <authorList>
            <person name="Cheng C.Y."/>
            <person name="Krishnakumar V."/>
            <person name="Chan A.P."/>
            <person name="Thibaud-Nissen F."/>
            <person name="Schobel S."/>
            <person name="Town C.D."/>
        </authorList>
    </citation>
    <scope>GENOME REANNOTATION</scope>
    <source>
        <strain>cv. Columbia</strain>
    </source>
</reference>
<reference key="4">
    <citation type="journal article" date="2003" name="Science">
        <title>Empirical analysis of transcriptional activity in the Arabidopsis genome.</title>
        <authorList>
            <person name="Yamada K."/>
            <person name="Lim J."/>
            <person name="Dale J.M."/>
            <person name="Chen H."/>
            <person name="Shinn P."/>
            <person name="Palm C.J."/>
            <person name="Southwick A.M."/>
            <person name="Wu H.C."/>
            <person name="Kim C.J."/>
            <person name="Nguyen M."/>
            <person name="Pham P.K."/>
            <person name="Cheuk R.F."/>
            <person name="Karlin-Newmann G."/>
            <person name="Liu S.X."/>
            <person name="Lam B."/>
            <person name="Sakano H."/>
            <person name="Wu T."/>
            <person name="Yu G."/>
            <person name="Miranda M."/>
            <person name="Quach H.L."/>
            <person name="Tripp M."/>
            <person name="Chang C.H."/>
            <person name="Lee J.M."/>
            <person name="Toriumi M.J."/>
            <person name="Chan M.M."/>
            <person name="Tang C.C."/>
            <person name="Onodera C.S."/>
            <person name="Deng J.M."/>
            <person name="Akiyama K."/>
            <person name="Ansari Y."/>
            <person name="Arakawa T."/>
            <person name="Banh J."/>
            <person name="Banno F."/>
            <person name="Bowser L."/>
            <person name="Brooks S.Y."/>
            <person name="Carninci P."/>
            <person name="Chao Q."/>
            <person name="Choy N."/>
            <person name="Enju A."/>
            <person name="Goldsmith A.D."/>
            <person name="Gurjal M."/>
            <person name="Hansen N.F."/>
            <person name="Hayashizaki Y."/>
            <person name="Johnson-Hopson C."/>
            <person name="Hsuan V.W."/>
            <person name="Iida K."/>
            <person name="Karnes M."/>
            <person name="Khan S."/>
            <person name="Koesema E."/>
            <person name="Ishida J."/>
            <person name="Jiang P.X."/>
            <person name="Jones T."/>
            <person name="Kawai J."/>
            <person name="Kamiya A."/>
            <person name="Meyers C."/>
            <person name="Nakajima M."/>
            <person name="Narusaka M."/>
            <person name="Seki M."/>
            <person name="Sakurai T."/>
            <person name="Satou M."/>
            <person name="Tamse R."/>
            <person name="Vaysberg M."/>
            <person name="Wallender E.K."/>
            <person name="Wong C."/>
            <person name="Yamamura Y."/>
            <person name="Yuan S."/>
            <person name="Shinozaki K."/>
            <person name="Davis R.W."/>
            <person name="Theologis A."/>
            <person name="Ecker J.R."/>
        </authorList>
    </citation>
    <scope>NUCLEOTIDE SEQUENCE [LARGE SCALE MRNA]</scope>
    <source>
        <strain>cv. Columbia</strain>
    </source>
</reference>
<reference key="5">
    <citation type="submission" date="2002-03" db="EMBL/GenBank/DDBJ databases">
        <title>Full-length cDNA from Arabidopsis thaliana.</title>
        <authorList>
            <person name="Brover V.V."/>
            <person name="Troukhan M.E."/>
            <person name="Alexandrov N.A."/>
            <person name="Lu Y.-P."/>
            <person name="Flavell R.B."/>
            <person name="Feldmann K.A."/>
        </authorList>
    </citation>
    <scope>NUCLEOTIDE SEQUENCE [LARGE SCALE MRNA]</scope>
</reference>
<reference key="6">
    <citation type="journal article" date="2001" name="Protoplasma">
        <title>Higher-plant plasma membrane cytochrome b561: a protein in search of a function.</title>
        <authorList>
            <person name="Asard H."/>
            <person name="Kapila J."/>
            <person name="Verelst W."/>
            <person name="Berczi A."/>
        </authorList>
    </citation>
    <scope>GENE FAMILY</scope>
    <scope>NOMENCLATURE</scope>
</reference>
<reference key="7">
    <citation type="journal article" date="2003" name="Protoplasma">
        <title>Structure prediction for the di-heme cytochrome b561 protein family.</title>
        <authorList>
            <person name="Bashtovyy D."/>
            <person name="Berczi A."/>
            <person name="Asard H."/>
            <person name="Pali T."/>
        </authorList>
    </citation>
    <scope>TOPOLOGY</scope>
</reference>
<reference key="8">
    <citation type="journal article" date="2004" name="Physiol. Plantarum">
        <title>Tissue-specific expression and developmental regulation of cytochrome b561 genes in Arabidopsis thaliana and Raphanus sativus.</title>
        <authorList>
            <person name="Verelst W."/>
            <person name="Kapila J."/>
            <person name="De Almeida Engler J."/>
            <person name="Stone J.M."/>
            <person name="Caubergs R."/>
            <person name="Asard H."/>
        </authorList>
    </citation>
    <scope>TISSUE SPECIFICITY</scope>
    <scope>DEVELOPMENTAL STAGE</scope>
</reference>
<reference key="9">
    <citation type="journal article" date="2004" name="Plant Physiol.">
        <title>Localization of an ascorbate-reducible cytochrome b561 in the plant tonoplast.</title>
        <authorList>
            <person name="Griesen D."/>
            <person name="Su D."/>
            <person name="Berczi A."/>
            <person name="Asard H."/>
        </authorList>
    </citation>
    <scope>SUBCELLULAR LOCATION</scope>
    <scope>FUNCTION</scope>
    <scope>CATALYTIC ACTIVITY</scope>
</reference>
<reference key="10">
    <citation type="journal article" date="2005" name="Biochim. Biophys. Acta">
        <title>Cytochrome b561 protein family: expanding roles and versatile transmembrane electron transfer abilities as predicted by a new classification system and protein sequence motif analyses.</title>
        <authorList>
            <person name="Tsubaki M."/>
            <person name="Takeuchi F."/>
            <person name="Nakanishi N."/>
        </authorList>
    </citation>
    <scope>GENE FAMILY</scope>
    <scope>NOMENCLATURE</scope>
</reference>
<reference key="11">
    <citation type="journal article" date="2007" name="FEBS Lett.">
        <title>An Arabidopsis cytochrome b561 with trans-membrane ferrireductase capability.</title>
        <authorList>
            <person name="Berczi A."/>
            <person name="Su D."/>
            <person name="Asard H."/>
        </authorList>
    </citation>
    <scope>FUNCTION</scope>
    <scope>CATALYTIC ACTIVITY</scope>
</reference>
<reference key="12">
    <citation type="journal article" date="2011" name="FEBS Lett.">
        <title>Axial ligation of the high-potential heme center in an Arabidopsis cytochrome b561.</title>
        <authorList>
            <person name="Desmet F."/>
            <person name="Berczi A."/>
            <person name="Zimanyi L."/>
            <person name="Asard H."/>
            <person name="Van Doorslaer S."/>
        </authorList>
    </citation>
    <scope>COFACTOR</scope>
    <scope>TOPOLOGY</scope>
    <scope>MUTAGENESIS OF HIS-83 AND HIS-156</scope>
</reference>
<reference key="13">
    <citation type="journal article" date="2013" name="Antioxid. Redox Signal.">
        <title>Cytochromes b561: ascorbate-mediated trans-membrane electron transport.</title>
        <authorList>
            <person name="Asard H."/>
            <person name="Barbaro R."/>
            <person name="Trost P."/>
            <person name="Berczi A."/>
        </authorList>
    </citation>
    <scope>REVIEW</scope>
</reference>
<reference key="14">
    <citation type="journal article" date="2013" name="Eur. Biophys. J.">
        <title>Dihydrolipoic acid reduces cytochrome b561 proteins.</title>
        <authorList>
            <person name="Berczi A."/>
            <person name="Zimanyi L."/>
            <person name="Asard H."/>
        </authorList>
    </citation>
    <scope>FUNCTION</scope>
</reference>
<keyword id="KW-0249">Electron transport</keyword>
<keyword id="KW-0349">Heme</keyword>
<keyword id="KW-0408">Iron</keyword>
<keyword id="KW-0472">Membrane</keyword>
<keyword id="KW-0479">Metal-binding</keyword>
<keyword id="KW-1185">Reference proteome</keyword>
<keyword id="KW-1278">Translocase</keyword>
<keyword id="KW-0812">Transmembrane</keyword>
<keyword id="KW-1133">Transmembrane helix</keyword>
<keyword id="KW-0813">Transport</keyword>
<keyword id="KW-0926">Vacuole</keyword>
<name>ACFR1_ARATH</name>
<organism>
    <name type="scientific">Arabidopsis thaliana</name>
    <name type="common">Mouse-ear cress</name>
    <dbReference type="NCBI Taxonomy" id="3702"/>
    <lineage>
        <taxon>Eukaryota</taxon>
        <taxon>Viridiplantae</taxon>
        <taxon>Streptophyta</taxon>
        <taxon>Embryophyta</taxon>
        <taxon>Tracheophyta</taxon>
        <taxon>Spermatophyta</taxon>
        <taxon>Magnoliopsida</taxon>
        <taxon>eudicotyledons</taxon>
        <taxon>Gunneridae</taxon>
        <taxon>Pentapetalae</taxon>
        <taxon>rosids</taxon>
        <taxon>malvids</taxon>
        <taxon>Brassicales</taxon>
        <taxon>Brassicaceae</taxon>
        <taxon>Camelineae</taxon>
        <taxon>Arabidopsis</taxon>
    </lineage>
</organism>
<gene>
    <name type="primary">CYB561A</name>
    <name type="synonym">ACYB-2</name>
    <name type="synonym">CYB561B1</name>
    <name type="synonym">CYBASC1</name>
    <name type="ordered locus">At4g25570</name>
    <name type="ORF">M7J2.60</name>
</gene>
<sequence length="239" mass="25865">MAVRINAMAVTFVAHALAVIAAIMVLVWSISYRGGLAWEATNKNLIFNLHPVLMLIGFIILGGEAIISYKSLPLEKPVKKLIHLILHAIALALGIFGICAAFKNHNESHIPNLYSLHSWIGIGVISLYGFQWVYSFIVFFFPGGSTNLKSGLLPWHAMLGLFVYILAVGNAALGFLEKLTFLENGGLDKYGSEAFLINFTAIITILFGAFVVLTASAESPSPSPSVSNDDSVDFSYSAI</sequence>
<comment type="function">
    <text evidence="5 7 9">Two-heme-containing cytochrome. Catalyzes ascorbate-dependent trans-membrane ferric-chelate reduction. Able to use dihydrolipoic acid (DHLA) as an alternative substrate to ascorbate.</text>
</comment>
<comment type="catalytic activity">
    <reaction evidence="5 7">
        <text>Fe(3+)(out) + L-ascorbate(in) = monodehydro-L-ascorbate radical(in) + Fe(2+)(out) + H(+)</text>
        <dbReference type="Rhea" id="RHEA:30403"/>
        <dbReference type="ChEBI" id="CHEBI:15378"/>
        <dbReference type="ChEBI" id="CHEBI:29033"/>
        <dbReference type="ChEBI" id="CHEBI:29034"/>
        <dbReference type="ChEBI" id="CHEBI:38290"/>
        <dbReference type="ChEBI" id="CHEBI:59513"/>
        <dbReference type="EC" id="7.2.1.3"/>
    </reaction>
</comment>
<comment type="cofactor">
    <cofactor evidence="8">
        <name>heme b</name>
        <dbReference type="ChEBI" id="CHEBI:60344"/>
    </cofactor>
    <text evidence="8">Binds 2 heme b groups non-covalently.</text>
</comment>
<comment type="subunit">
    <text evidence="1">Homodimer.</text>
</comment>
<comment type="interaction">
    <interactant intactId="EBI-2295096">
        <id>Q8L856</id>
    </interactant>
    <interactant intactId="EBI-2292882">
        <id>Q9SIN1</id>
        <label>TTL3</label>
    </interactant>
    <organismsDiffer>false</organismsDiffer>
    <experiments>2</experiments>
</comment>
<comment type="subcellular location">
    <subcellularLocation>
        <location evidence="5">Vacuole membrane</location>
        <topology evidence="5">Multi-pass membrane protein</topology>
    </subcellularLocation>
</comment>
<comment type="tissue specificity">
    <text evidence="6">Expressed in roots, seedlings and leaves. Lower expression in flowers. Expressed in the L1 layer of the shoot apex, in the epidermis of leaf primordia and young leaves and in vascular bundles. In the differentiation zone of the root, detected in the pericycle and in the epidermis, but not in the cortex. Strongly expressed in the lateral part of the root cap and in the epidermis of the root tip, but not in the meristematic tissue. Not expressed in lateral roots. In mature embryos, expressed in the epidermis, cotyledon tips and root tips.</text>
</comment>
<comment type="developmental stage">
    <text evidence="6">Strong reduction in expression levels in flowers following fertilization.</text>
</comment>
<comment type="sequence caution" evidence="10">
    <conflict type="erroneous gene model prediction">
        <sequence resource="EMBL-CDS" id="CAA18169"/>
    </conflict>
</comment>
<comment type="sequence caution" evidence="10">
    <conflict type="erroneous gene model prediction">
        <sequence resource="EMBL-CDS" id="CAB81367"/>
    </conflict>
</comment>
<protein>
    <recommendedName>
        <fullName>Transmembrane ascorbate ferrireductase 1</fullName>
        <ecNumber evidence="5 7">7.2.1.3</ecNumber>
    </recommendedName>
    <alternativeName>
        <fullName>Cytochrome b561</fullName>
        <shortName>Artb561-1</shortName>
        <shortName>AtCytb561</shortName>
    </alternativeName>
    <alternativeName>
        <fullName>Protein b561A.tha5</fullName>
    </alternativeName>
    <alternativeName>
        <fullName>Tonoplast Cyt-b561</fullName>
        <shortName>TCytb</shortName>
    </alternativeName>
</protein>
<accession>Q8L856</accession>
<accession>O65605</accession>
<accession>Q8LE60</accession>
<accession>Q9CAZ1</accession>
<accession>Q9M0K3</accession>
<dbReference type="EC" id="7.2.1.3" evidence="5 7"/>
<dbReference type="EMBL" id="AB049628">
    <property type="protein sequence ID" value="BAB21522.1"/>
    <property type="molecule type" value="mRNA"/>
</dbReference>
<dbReference type="EMBL" id="AL022197">
    <property type="protein sequence ID" value="CAA18169.1"/>
    <property type="status" value="ALT_SEQ"/>
    <property type="molecule type" value="Genomic_DNA"/>
</dbReference>
<dbReference type="EMBL" id="AL161563">
    <property type="protein sequence ID" value="CAB81367.1"/>
    <property type="status" value="ALT_SEQ"/>
    <property type="molecule type" value="Genomic_DNA"/>
</dbReference>
<dbReference type="EMBL" id="CP002687">
    <property type="protein sequence ID" value="AEE85078.1"/>
    <property type="molecule type" value="Genomic_DNA"/>
</dbReference>
<dbReference type="EMBL" id="AY120730">
    <property type="protein sequence ID" value="AAM53288.1"/>
    <property type="molecule type" value="mRNA"/>
</dbReference>
<dbReference type="EMBL" id="BT002176">
    <property type="protein sequence ID" value="AAN72187.1"/>
    <property type="molecule type" value="mRNA"/>
</dbReference>
<dbReference type="EMBL" id="AY085603">
    <property type="protein sequence ID" value="AAM62824.1"/>
    <property type="molecule type" value="mRNA"/>
</dbReference>
<dbReference type="PIR" id="E85295">
    <property type="entry name" value="E85295"/>
</dbReference>
<dbReference type="PIR" id="T05790">
    <property type="entry name" value="T05790"/>
</dbReference>
<dbReference type="RefSeq" id="NP_001328918.1">
    <property type="nucleotide sequence ID" value="NM_001341751.1"/>
</dbReference>
<dbReference type="RefSeq" id="NP_567723.1">
    <property type="nucleotide sequence ID" value="NM_118689.4"/>
</dbReference>
<dbReference type="SMR" id="Q8L856"/>
<dbReference type="BioGRID" id="13949">
    <property type="interactions" value="6"/>
</dbReference>
<dbReference type="FunCoup" id="Q8L856">
    <property type="interactions" value="950"/>
</dbReference>
<dbReference type="IntAct" id="Q8L856">
    <property type="interactions" value="4"/>
</dbReference>
<dbReference type="STRING" id="3702.Q8L856"/>
<dbReference type="PaxDb" id="3702-AT4G25570.1"/>
<dbReference type="ProteomicsDB" id="244357"/>
<dbReference type="EnsemblPlants" id="AT4G25570.1">
    <property type="protein sequence ID" value="AT4G25570.1"/>
    <property type="gene ID" value="AT4G25570"/>
</dbReference>
<dbReference type="GeneID" id="828662"/>
<dbReference type="Gramene" id="AT4G25570.1">
    <property type="protein sequence ID" value="AT4G25570.1"/>
    <property type="gene ID" value="AT4G25570"/>
</dbReference>
<dbReference type="KEGG" id="ath:AT4G25570"/>
<dbReference type="Araport" id="AT4G25570"/>
<dbReference type="TAIR" id="AT4G25570">
    <property type="gene designation" value="ACYB-2"/>
</dbReference>
<dbReference type="eggNOG" id="KOG1619">
    <property type="taxonomic scope" value="Eukaryota"/>
</dbReference>
<dbReference type="HOGENOM" id="CLU_069712_0_1_1"/>
<dbReference type="InParanoid" id="Q8L856"/>
<dbReference type="OrthoDB" id="907479at2759"/>
<dbReference type="PhylomeDB" id="Q8L856"/>
<dbReference type="BRENDA" id="7.2.1.3">
    <property type="organism ID" value="399"/>
</dbReference>
<dbReference type="PRO" id="PR:Q8L856"/>
<dbReference type="Proteomes" id="UP000006548">
    <property type="component" value="Chromosome 4"/>
</dbReference>
<dbReference type="ExpressionAtlas" id="Q8L856">
    <property type="expression patterns" value="baseline and differential"/>
</dbReference>
<dbReference type="GO" id="GO:0009507">
    <property type="term" value="C:chloroplast"/>
    <property type="evidence" value="ECO:0007005"/>
    <property type="project" value="TAIR"/>
</dbReference>
<dbReference type="GO" id="GO:0000325">
    <property type="term" value="C:plant-type vacuole"/>
    <property type="evidence" value="ECO:0007005"/>
    <property type="project" value="TAIR"/>
</dbReference>
<dbReference type="GO" id="GO:0005774">
    <property type="term" value="C:vacuolar membrane"/>
    <property type="evidence" value="ECO:0007669"/>
    <property type="project" value="UniProtKB-SubCell"/>
</dbReference>
<dbReference type="GO" id="GO:0005773">
    <property type="term" value="C:vacuole"/>
    <property type="evidence" value="ECO:0007005"/>
    <property type="project" value="TAIR"/>
</dbReference>
<dbReference type="GO" id="GO:0046872">
    <property type="term" value="F:metal ion binding"/>
    <property type="evidence" value="ECO:0007669"/>
    <property type="project" value="UniProtKB-KW"/>
</dbReference>
<dbReference type="GO" id="GO:0016491">
    <property type="term" value="F:oxidoreductase activity"/>
    <property type="evidence" value="ECO:0000314"/>
    <property type="project" value="UniProtKB"/>
</dbReference>
<dbReference type="GO" id="GO:0019904">
    <property type="term" value="F:protein domain specific binding"/>
    <property type="evidence" value="ECO:0000353"/>
    <property type="project" value="CAFA"/>
</dbReference>
<dbReference type="GO" id="GO:0140571">
    <property type="term" value="F:transmembrane ascorbate ferrireductase activity"/>
    <property type="evidence" value="ECO:0007669"/>
    <property type="project" value="UniProtKB-EC"/>
</dbReference>
<dbReference type="CDD" id="cd08766">
    <property type="entry name" value="Cyt_b561_ACYB-1_like"/>
    <property type="match status" value="1"/>
</dbReference>
<dbReference type="FunFam" id="1.20.120.1770:FF:000001">
    <property type="entry name" value="Cytochrome b reductase 1"/>
    <property type="match status" value="1"/>
</dbReference>
<dbReference type="Gene3D" id="1.20.120.1770">
    <property type="match status" value="1"/>
</dbReference>
<dbReference type="InterPro" id="IPR043205">
    <property type="entry name" value="CYB561/CYBRD1-like"/>
</dbReference>
<dbReference type="InterPro" id="IPR006593">
    <property type="entry name" value="Cyt_b561/ferric_Rdtase_TM"/>
</dbReference>
<dbReference type="PANTHER" id="PTHR10106">
    <property type="entry name" value="CYTOCHROME B561-RELATED"/>
    <property type="match status" value="1"/>
</dbReference>
<dbReference type="PANTHER" id="PTHR10106:SF22">
    <property type="entry name" value="TRANSMEMBRANE ASCORBATE FERRIREDUCTASE 1"/>
    <property type="match status" value="1"/>
</dbReference>
<dbReference type="Pfam" id="PF03188">
    <property type="entry name" value="Cytochrom_B561"/>
    <property type="match status" value="1"/>
</dbReference>
<dbReference type="SMART" id="SM00665">
    <property type="entry name" value="B561"/>
    <property type="match status" value="1"/>
</dbReference>
<dbReference type="PROSITE" id="PS50939">
    <property type="entry name" value="CYTOCHROME_B561"/>
    <property type="match status" value="1"/>
</dbReference>
<feature type="chain" id="PRO_0000412907" description="Transmembrane ascorbate ferrireductase 1">
    <location>
        <begin position="1"/>
        <end position="239"/>
    </location>
</feature>
<feature type="topological domain" description="Cytoplasmic" evidence="2">
    <location>
        <begin position="1"/>
        <end position="7"/>
    </location>
</feature>
<feature type="transmembrane region" description="Helical; Name=1" evidence="2">
    <location>
        <begin position="8"/>
        <end position="28"/>
    </location>
</feature>
<feature type="topological domain" description="Lumenal" evidence="2">
    <location>
        <begin position="29"/>
        <end position="45"/>
    </location>
</feature>
<feature type="transmembrane region" description="Helical; Name=2" evidence="2">
    <location>
        <begin position="46"/>
        <end position="66"/>
    </location>
</feature>
<feature type="topological domain" description="Cytoplasmic" evidence="2">
    <location>
        <begin position="67"/>
        <end position="81"/>
    </location>
</feature>
<feature type="transmembrane region" description="Helical; Name=3" evidence="2">
    <location>
        <begin position="82"/>
        <end position="102"/>
    </location>
</feature>
<feature type="topological domain" description="Lumenal" evidence="2">
    <location>
        <begin position="103"/>
        <end position="119"/>
    </location>
</feature>
<feature type="transmembrane region" description="Helical; Name=4" evidence="2">
    <location>
        <begin position="120"/>
        <end position="140"/>
    </location>
</feature>
<feature type="topological domain" description="Cytoplasmic" evidence="2">
    <location>
        <begin position="141"/>
        <end position="155"/>
    </location>
</feature>
<feature type="transmembrane region" description="Helical; Name=5" evidence="2">
    <location>
        <begin position="156"/>
        <end position="176"/>
    </location>
</feature>
<feature type="topological domain" description="Lumenal" evidence="2">
    <location>
        <begin position="177"/>
        <end position="193"/>
    </location>
</feature>
<feature type="transmembrane region" description="Helical; Name=6" evidence="2">
    <location>
        <begin position="194"/>
        <end position="214"/>
    </location>
</feature>
<feature type="topological domain" description="Cytoplasmic" evidence="2">
    <location>
        <begin position="215"/>
        <end position="239"/>
    </location>
</feature>
<feature type="domain" description="Cytochrome b561" evidence="3">
    <location>
        <begin position="13"/>
        <end position="216"/>
    </location>
</feature>
<feature type="region of interest" description="Disordered" evidence="4">
    <location>
        <begin position="217"/>
        <end position="239"/>
    </location>
</feature>
<feature type="compositionally biased region" description="Low complexity" evidence="4">
    <location>
        <begin position="224"/>
        <end position="239"/>
    </location>
</feature>
<feature type="binding site" description="axial binding residue" evidence="1">
    <location>
        <position position="50"/>
    </location>
    <ligand>
        <name>heme b</name>
        <dbReference type="ChEBI" id="CHEBI:60344"/>
        <label>1</label>
    </ligand>
    <ligandPart>
        <name>Fe</name>
        <dbReference type="ChEBI" id="CHEBI:18248"/>
    </ligandPart>
</feature>
<feature type="binding site" description="axial binding residue" evidence="1">
    <location>
        <position position="83"/>
    </location>
    <ligand>
        <name>heme b</name>
        <dbReference type="ChEBI" id="CHEBI:60344"/>
        <label>2</label>
    </ligand>
    <ligandPart>
        <name>Fe</name>
        <dbReference type="ChEBI" id="CHEBI:18248"/>
    </ligandPart>
</feature>
<feature type="binding site" description="axial binding residue" evidence="1">
    <location>
        <position position="117"/>
    </location>
    <ligand>
        <name>heme b</name>
        <dbReference type="ChEBI" id="CHEBI:60344"/>
        <label>1</label>
    </ligand>
    <ligandPart>
        <name>Fe</name>
        <dbReference type="ChEBI" id="CHEBI:18248"/>
    </ligandPart>
</feature>
<feature type="binding site" description="axial binding residue" evidence="1">
    <location>
        <position position="156"/>
    </location>
    <ligand>
        <name>heme b</name>
        <dbReference type="ChEBI" id="CHEBI:60344"/>
        <label>2</label>
    </ligand>
    <ligandPart>
        <name>Fe</name>
        <dbReference type="ChEBI" id="CHEBI:18248"/>
    </ligandPart>
</feature>
<feature type="mutagenesis site" description="Disrupts high-potential heme; when associated with A-156." evidence="8">
    <original>H</original>
    <variation>A</variation>
    <location>
        <position position="83"/>
    </location>
</feature>
<feature type="mutagenesis site" description="Disrupts high-potential heme; when associated with L-156." evidence="8">
    <original>H</original>
    <variation>L</variation>
    <location>
        <position position="83"/>
    </location>
</feature>
<feature type="mutagenesis site" description="Disrupts high-potential heme; when associated with A-83." evidence="8">
    <original>H</original>
    <variation>A</variation>
    <location>
        <position position="156"/>
    </location>
</feature>
<feature type="mutagenesis site" description="Disrupts high-potential heme; when associated with L-83." evidence="8">
    <original>H</original>
    <variation>L</variation>
    <location>
        <position position="156"/>
    </location>
</feature>
<feature type="sequence conflict" description="In Ref. 1; BAB21522." evidence="10" ref="1">
    <location>
        <begin position="25"/>
        <end position="26"/>
    </location>
</feature>
<feature type="sequence conflict" description="In Ref. 2; CAB81367." evidence="10" ref="2">
    <original>N</original>
    <variation>K</variation>
    <location>
        <position position="48"/>
    </location>
</feature>
<feature type="sequence conflict" description="In Ref. 5; AAM62824." evidence="10" ref="5">
    <location>
        <begin position="219"/>
        <end position="220"/>
    </location>
</feature>
<evidence type="ECO:0000250" key="1">
    <source>
        <dbReference type="UniProtKB" id="Q9SWS1"/>
    </source>
</evidence>
<evidence type="ECO:0000255" key="2"/>
<evidence type="ECO:0000255" key="3">
    <source>
        <dbReference type="PROSITE-ProRule" id="PRU00242"/>
    </source>
</evidence>
<evidence type="ECO:0000256" key="4">
    <source>
        <dbReference type="SAM" id="MobiDB-lite"/>
    </source>
</evidence>
<evidence type="ECO:0000269" key="5">
    <source>
    </source>
</evidence>
<evidence type="ECO:0000269" key="6">
    <source>
    </source>
</evidence>
<evidence type="ECO:0000269" key="7">
    <source>
    </source>
</evidence>
<evidence type="ECO:0000269" key="8">
    <source>
    </source>
</evidence>
<evidence type="ECO:0000269" key="9">
    <source>
    </source>
</evidence>
<evidence type="ECO:0000305" key="10"/>